<dbReference type="EC" id="3.1.1.29" evidence="1"/>
<dbReference type="EMBL" id="CP001110">
    <property type="protein sequence ID" value="ACF43434.1"/>
    <property type="molecule type" value="Genomic_DNA"/>
</dbReference>
<dbReference type="RefSeq" id="WP_012507926.1">
    <property type="nucleotide sequence ID" value="NC_011060.1"/>
</dbReference>
<dbReference type="SMR" id="B4SGM1"/>
<dbReference type="STRING" id="324925.Ppha_1159"/>
<dbReference type="KEGG" id="pph:Ppha_1159"/>
<dbReference type="eggNOG" id="COG0193">
    <property type="taxonomic scope" value="Bacteria"/>
</dbReference>
<dbReference type="HOGENOM" id="CLU_062456_4_1_10"/>
<dbReference type="OrthoDB" id="9800507at2"/>
<dbReference type="Proteomes" id="UP000002724">
    <property type="component" value="Chromosome"/>
</dbReference>
<dbReference type="GO" id="GO:0005737">
    <property type="term" value="C:cytoplasm"/>
    <property type="evidence" value="ECO:0007669"/>
    <property type="project" value="UniProtKB-SubCell"/>
</dbReference>
<dbReference type="GO" id="GO:0004045">
    <property type="term" value="F:peptidyl-tRNA hydrolase activity"/>
    <property type="evidence" value="ECO:0007669"/>
    <property type="project" value="UniProtKB-UniRule"/>
</dbReference>
<dbReference type="GO" id="GO:0000049">
    <property type="term" value="F:tRNA binding"/>
    <property type="evidence" value="ECO:0007669"/>
    <property type="project" value="UniProtKB-UniRule"/>
</dbReference>
<dbReference type="GO" id="GO:0006515">
    <property type="term" value="P:protein quality control for misfolded or incompletely synthesized proteins"/>
    <property type="evidence" value="ECO:0007669"/>
    <property type="project" value="UniProtKB-UniRule"/>
</dbReference>
<dbReference type="GO" id="GO:0072344">
    <property type="term" value="P:rescue of stalled ribosome"/>
    <property type="evidence" value="ECO:0007669"/>
    <property type="project" value="UniProtKB-UniRule"/>
</dbReference>
<dbReference type="CDD" id="cd00462">
    <property type="entry name" value="PTH"/>
    <property type="match status" value="1"/>
</dbReference>
<dbReference type="FunFam" id="3.40.50.1470:FF:000001">
    <property type="entry name" value="Peptidyl-tRNA hydrolase"/>
    <property type="match status" value="1"/>
</dbReference>
<dbReference type="Gene3D" id="3.40.50.1470">
    <property type="entry name" value="Peptidyl-tRNA hydrolase"/>
    <property type="match status" value="1"/>
</dbReference>
<dbReference type="HAMAP" id="MF_00083">
    <property type="entry name" value="Pept_tRNA_hydro_bact"/>
    <property type="match status" value="1"/>
</dbReference>
<dbReference type="InterPro" id="IPR001328">
    <property type="entry name" value="Pept_tRNA_hydro"/>
</dbReference>
<dbReference type="InterPro" id="IPR018171">
    <property type="entry name" value="Pept_tRNA_hydro_CS"/>
</dbReference>
<dbReference type="InterPro" id="IPR036416">
    <property type="entry name" value="Pept_tRNA_hydro_sf"/>
</dbReference>
<dbReference type="NCBIfam" id="TIGR00447">
    <property type="entry name" value="pth"/>
    <property type="match status" value="1"/>
</dbReference>
<dbReference type="PANTHER" id="PTHR17224">
    <property type="entry name" value="PEPTIDYL-TRNA HYDROLASE"/>
    <property type="match status" value="1"/>
</dbReference>
<dbReference type="PANTHER" id="PTHR17224:SF1">
    <property type="entry name" value="PEPTIDYL-TRNA HYDROLASE"/>
    <property type="match status" value="1"/>
</dbReference>
<dbReference type="Pfam" id="PF01195">
    <property type="entry name" value="Pept_tRNA_hydro"/>
    <property type="match status" value="1"/>
</dbReference>
<dbReference type="SUPFAM" id="SSF53178">
    <property type="entry name" value="Peptidyl-tRNA hydrolase-like"/>
    <property type="match status" value="1"/>
</dbReference>
<dbReference type="PROSITE" id="PS01195">
    <property type="entry name" value="PEPT_TRNA_HYDROL_1"/>
    <property type="match status" value="1"/>
</dbReference>
<proteinExistence type="inferred from homology"/>
<sequence>MKLIVGLGNPESRYIGTRHNIGFSAVEKIAASFGANFSKGKGKSLEAKITHRGEQVIIIKPMTYMNLSGHAVVAAMNFYKIVRNDILIICDDLNLPSGTIRLRAKGSAGGQNGLKHIIESLGSEEFARLRIGIRVDETSLTSFSSFVLGKFSENEKVVMEKILPITSDAALDFTINGIEHAMNNYNKPVT</sequence>
<feature type="chain" id="PRO_1000092965" description="Peptidyl-tRNA hydrolase">
    <location>
        <begin position="1"/>
        <end position="190"/>
    </location>
</feature>
<feature type="active site" description="Proton acceptor" evidence="1">
    <location>
        <position position="19"/>
    </location>
</feature>
<feature type="binding site" evidence="1">
    <location>
        <position position="14"/>
    </location>
    <ligand>
        <name>tRNA</name>
        <dbReference type="ChEBI" id="CHEBI:17843"/>
    </ligand>
</feature>
<feature type="binding site" evidence="1">
    <location>
        <position position="64"/>
    </location>
    <ligand>
        <name>tRNA</name>
        <dbReference type="ChEBI" id="CHEBI:17843"/>
    </ligand>
</feature>
<feature type="binding site" evidence="1">
    <location>
        <position position="66"/>
    </location>
    <ligand>
        <name>tRNA</name>
        <dbReference type="ChEBI" id="CHEBI:17843"/>
    </ligand>
</feature>
<feature type="binding site" evidence="1">
    <location>
        <position position="112"/>
    </location>
    <ligand>
        <name>tRNA</name>
        <dbReference type="ChEBI" id="CHEBI:17843"/>
    </ligand>
</feature>
<feature type="site" description="Discriminates between blocked and unblocked aminoacyl-tRNA" evidence="1">
    <location>
        <position position="9"/>
    </location>
</feature>
<feature type="site" description="Stabilizes the basic form of H active site to accept a proton" evidence="1">
    <location>
        <position position="91"/>
    </location>
</feature>
<gene>
    <name evidence="1" type="primary">pth</name>
    <name type="ordered locus">Ppha_1159</name>
</gene>
<name>PTH_PELPB</name>
<evidence type="ECO:0000255" key="1">
    <source>
        <dbReference type="HAMAP-Rule" id="MF_00083"/>
    </source>
</evidence>
<comment type="function">
    <text evidence="1">Hydrolyzes ribosome-free peptidyl-tRNAs (with 1 or more amino acids incorporated), which drop off the ribosome during protein synthesis, or as a result of ribosome stalling.</text>
</comment>
<comment type="function">
    <text evidence="1">Catalyzes the release of premature peptidyl moieties from peptidyl-tRNA molecules trapped in stalled 50S ribosomal subunits, and thus maintains levels of free tRNAs and 50S ribosomes.</text>
</comment>
<comment type="catalytic activity">
    <reaction evidence="1">
        <text>an N-acyl-L-alpha-aminoacyl-tRNA + H2O = an N-acyl-L-amino acid + a tRNA + H(+)</text>
        <dbReference type="Rhea" id="RHEA:54448"/>
        <dbReference type="Rhea" id="RHEA-COMP:10123"/>
        <dbReference type="Rhea" id="RHEA-COMP:13883"/>
        <dbReference type="ChEBI" id="CHEBI:15377"/>
        <dbReference type="ChEBI" id="CHEBI:15378"/>
        <dbReference type="ChEBI" id="CHEBI:59874"/>
        <dbReference type="ChEBI" id="CHEBI:78442"/>
        <dbReference type="ChEBI" id="CHEBI:138191"/>
        <dbReference type="EC" id="3.1.1.29"/>
    </reaction>
</comment>
<comment type="subunit">
    <text evidence="1">Monomer.</text>
</comment>
<comment type="subcellular location">
    <subcellularLocation>
        <location evidence="1">Cytoplasm</location>
    </subcellularLocation>
</comment>
<comment type="similarity">
    <text evidence="1">Belongs to the PTH family.</text>
</comment>
<reference key="1">
    <citation type="submission" date="2008-06" db="EMBL/GenBank/DDBJ databases">
        <title>Complete sequence of Pelodictyon phaeoclathratiforme BU-1.</title>
        <authorList>
            <consortium name="US DOE Joint Genome Institute"/>
            <person name="Lucas S."/>
            <person name="Copeland A."/>
            <person name="Lapidus A."/>
            <person name="Glavina del Rio T."/>
            <person name="Dalin E."/>
            <person name="Tice H."/>
            <person name="Bruce D."/>
            <person name="Goodwin L."/>
            <person name="Pitluck S."/>
            <person name="Schmutz J."/>
            <person name="Larimer F."/>
            <person name="Land M."/>
            <person name="Hauser L."/>
            <person name="Kyrpides N."/>
            <person name="Mikhailova N."/>
            <person name="Liu Z."/>
            <person name="Li T."/>
            <person name="Zhao F."/>
            <person name="Overmann J."/>
            <person name="Bryant D.A."/>
            <person name="Richardson P."/>
        </authorList>
    </citation>
    <scope>NUCLEOTIDE SEQUENCE [LARGE SCALE GENOMIC DNA]</scope>
    <source>
        <strain>DSM 5477 / BU-1</strain>
    </source>
</reference>
<protein>
    <recommendedName>
        <fullName evidence="1">Peptidyl-tRNA hydrolase</fullName>
        <shortName evidence="1">Pth</shortName>
        <ecNumber evidence="1">3.1.1.29</ecNumber>
    </recommendedName>
</protein>
<organism>
    <name type="scientific">Pelodictyon phaeoclathratiforme (strain DSM 5477 / BU-1)</name>
    <dbReference type="NCBI Taxonomy" id="324925"/>
    <lineage>
        <taxon>Bacteria</taxon>
        <taxon>Pseudomonadati</taxon>
        <taxon>Chlorobiota</taxon>
        <taxon>Chlorobiia</taxon>
        <taxon>Chlorobiales</taxon>
        <taxon>Chlorobiaceae</taxon>
        <taxon>Chlorobium/Pelodictyon group</taxon>
        <taxon>Pelodictyon</taxon>
    </lineage>
</organism>
<keyword id="KW-0963">Cytoplasm</keyword>
<keyword id="KW-0378">Hydrolase</keyword>
<keyword id="KW-1185">Reference proteome</keyword>
<keyword id="KW-0694">RNA-binding</keyword>
<keyword id="KW-0820">tRNA-binding</keyword>
<accession>B4SGM1</accession>